<reference key="1">
    <citation type="journal article" date="2000" name="Life Sci.">
        <title>Molecular cloning of Rhombex-40 a transmembrane protein from the ventral medullary surface of the rat brain by differential display.</title>
        <authorList>
            <person name="Shimokawa N."/>
            <person name="Jingu H."/>
            <person name="Okada J."/>
            <person name="Miura M."/>
        </authorList>
    </citation>
    <scope>NUCLEOTIDE SEQUENCE [MRNA]</scope>
    <source>
        <strain>Wistar</strain>
        <tissue>Brain</tissue>
    </source>
</reference>
<reference key="2">
    <citation type="journal article" date="2003" name="Gene">
        <title>Cloning, genomic organization, alternative transcripts and expression analysis of CD99L2, a novel paralog of human CD99, and identification of evolutionary conserved motifs.</title>
        <authorList>
            <person name="Suh Y.H."/>
            <person name="Shin Y.K."/>
            <person name="Kook M.-C."/>
            <person name="Oh K.I."/>
            <person name="Park W.S."/>
            <person name="Kim S.H."/>
            <person name="Lee I.-S."/>
            <person name="Park H.J."/>
            <person name="Huh T.-L."/>
            <person name="Park S.H."/>
        </authorList>
    </citation>
    <scope>NUCLEOTIDE SEQUENCE [MRNA]</scope>
    <source>
        <strain>Lewis</strain>
        <tissue>Thymus</tissue>
    </source>
</reference>
<accession>Q8R1R5</accession>
<accession>Q9JJL7</accession>
<organism>
    <name type="scientific">Rattus norvegicus</name>
    <name type="common">Rat</name>
    <dbReference type="NCBI Taxonomy" id="10116"/>
    <lineage>
        <taxon>Eukaryota</taxon>
        <taxon>Metazoa</taxon>
        <taxon>Chordata</taxon>
        <taxon>Craniata</taxon>
        <taxon>Vertebrata</taxon>
        <taxon>Euteleostomi</taxon>
        <taxon>Mammalia</taxon>
        <taxon>Eutheria</taxon>
        <taxon>Euarchontoglires</taxon>
        <taxon>Glires</taxon>
        <taxon>Rodentia</taxon>
        <taxon>Myomorpha</taxon>
        <taxon>Muroidea</taxon>
        <taxon>Muridae</taxon>
        <taxon>Murinae</taxon>
        <taxon>Rattus</taxon>
    </lineage>
</organism>
<gene>
    <name type="primary">Cd99l2</name>
    <name type="synonym">Mic2l1</name>
    <name type="synonym">Rhombex40</name>
</gene>
<comment type="function">
    <text evidence="1">Plays a role in a late step of leukocyte extravasation helping cells to overcome the endothelial basement membrane. Acts at the same site as, but independently of, PECAM1 (By similarity). Homophilic adhesion molecule, but these interactions may not be required for cell aggregation (By similarity).</text>
</comment>
<comment type="subcellular location">
    <subcellularLocation>
        <location evidence="1">Cell membrane</location>
        <topology evidence="1">Single-pass type I membrane protein</topology>
        <orientation evidence="1">Extracellular side</orientation>
    </subcellularLocation>
    <subcellularLocation>
        <location evidence="1">Cell junction</location>
    </subcellularLocation>
    <subcellularLocation>
        <location evidence="2">Secreted</location>
    </subcellularLocation>
</comment>
<comment type="tissue specificity">
    <text>Expressed predominantly in the ventral medullary surface of the brain, moderate expression in the cerebral cortex and cerebellum. Low expression in lung and kidney. No expression in heart, stomach, intestine and skeletal muscle.</text>
</comment>
<comment type="PTM">
    <text evidence="2">O-glycosylated.</text>
</comment>
<comment type="similarity">
    <text evidence="5">Belongs to the CD99 family.</text>
</comment>
<comment type="sequence caution" evidence="5">
    <conflict type="frameshift">
        <sequence resource="EMBL-CDS" id="BAA90767"/>
    </conflict>
</comment>
<sequence>MVARLTTLLVCLVFSLATLVQRGYGDFDDFNLEDALKETSSVKQSHFSTTTRRTGTTRAPANPAERWDHMTTTTTKRPGTTRAPSNPLELDGFDLEDALDDRNDLDGPKKPSTGEGGGLSDKDLEDILGGGGYKPDKNKGGGGGYGSQDDPGSGAVTDPGTIAGLVSALAAALLGAVSGYLSYQHRKFCFSVQRGLDAAYVKGENLEAVVCEEPRVEAAMCEAPPVTDSTQHSQPTEPLAPERPRI</sequence>
<protein>
    <recommendedName>
        <fullName>CD99 antigen-like protein 2</fullName>
    </recommendedName>
    <alternativeName>
        <fullName>MIC2-like protein 1</fullName>
    </alternativeName>
    <alternativeName>
        <fullName>Rhombencephalic expression protein 40 kDa</fullName>
        <shortName>Protein rhombex-40</shortName>
    </alternativeName>
    <cdAntigenName>CD99</cdAntigenName>
</protein>
<feature type="signal peptide" evidence="3">
    <location>
        <begin position="1"/>
        <end position="25"/>
    </location>
</feature>
<feature type="chain" id="PRO_0000340095" description="CD99 antigen-like protein 2">
    <location>
        <begin position="26"/>
        <end position="246"/>
    </location>
</feature>
<feature type="topological domain" description="Extracellular" evidence="3">
    <location>
        <begin position="26"/>
        <end position="160"/>
    </location>
</feature>
<feature type="transmembrane region" description="Helical" evidence="3">
    <location>
        <begin position="161"/>
        <end position="181"/>
    </location>
</feature>
<feature type="topological domain" description="Cytoplasmic" evidence="3">
    <location>
        <begin position="182"/>
        <end position="246"/>
    </location>
</feature>
<feature type="region of interest" description="Disordered" evidence="4">
    <location>
        <begin position="43"/>
        <end position="156"/>
    </location>
</feature>
<feature type="region of interest" description="Disordered" evidence="4">
    <location>
        <begin position="223"/>
        <end position="246"/>
    </location>
</feature>
<feature type="compositionally biased region" description="Low complexity" evidence="4">
    <location>
        <begin position="49"/>
        <end position="58"/>
    </location>
</feature>
<feature type="compositionally biased region" description="Low complexity" evidence="4">
    <location>
        <begin position="71"/>
        <end position="81"/>
    </location>
</feature>
<feature type="compositionally biased region" description="Basic and acidic residues" evidence="4">
    <location>
        <begin position="100"/>
        <end position="109"/>
    </location>
</feature>
<feature type="compositionally biased region" description="Polar residues" evidence="4">
    <location>
        <begin position="227"/>
        <end position="236"/>
    </location>
</feature>
<feature type="glycosylation site" description="O-linked (Xyl...) (chondroitin sulfate) serine" evidence="2">
    <location>
        <position position="153"/>
    </location>
</feature>
<name>C99L2_RAT</name>
<proteinExistence type="evidence at transcript level"/>
<evidence type="ECO:0000250" key="1"/>
<evidence type="ECO:0000250" key="2">
    <source>
        <dbReference type="UniProtKB" id="Q8TCZ2"/>
    </source>
</evidence>
<evidence type="ECO:0000255" key="3"/>
<evidence type="ECO:0000256" key="4">
    <source>
        <dbReference type="SAM" id="MobiDB-lite"/>
    </source>
</evidence>
<evidence type="ECO:0000305" key="5"/>
<keyword id="KW-0130">Cell adhesion</keyword>
<keyword id="KW-0965">Cell junction</keyword>
<keyword id="KW-1003">Cell membrane</keyword>
<keyword id="KW-0325">Glycoprotein</keyword>
<keyword id="KW-0472">Membrane</keyword>
<keyword id="KW-0654">Proteoglycan</keyword>
<keyword id="KW-1185">Reference proteome</keyword>
<keyword id="KW-0964">Secreted</keyword>
<keyword id="KW-0732">Signal</keyword>
<keyword id="KW-0812">Transmembrane</keyword>
<keyword id="KW-1133">Transmembrane helix</keyword>
<dbReference type="EMBL" id="AB031014">
    <property type="protein sequence ID" value="BAA90767.1"/>
    <property type="status" value="ALT_FRAME"/>
    <property type="molecule type" value="mRNA"/>
</dbReference>
<dbReference type="EMBL" id="AF481858">
    <property type="protein sequence ID" value="AAL89685.1"/>
    <property type="molecule type" value="mRNA"/>
</dbReference>
<dbReference type="RefSeq" id="NP_001396499.1">
    <property type="nucleotide sequence ID" value="NM_001409570.2"/>
</dbReference>
<dbReference type="RefSeq" id="NP_001420426.1">
    <property type="nucleotide sequence ID" value="NM_001433497.1"/>
</dbReference>
<dbReference type="RefSeq" id="NP_604454.1">
    <property type="nucleotide sequence ID" value="NM_134459.1"/>
</dbReference>
<dbReference type="RefSeq" id="XP_006251738.1">
    <property type="nucleotide sequence ID" value="XM_006251676.3"/>
</dbReference>
<dbReference type="RefSeq" id="XP_008768818.1">
    <property type="nucleotide sequence ID" value="XM_008770596.2"/>
</dbReference>
<dbReference type="RefSeq" id="XP_017443944.1">
    <property type="nucleotide sequence ID" value="XM_017588455.1"/>
</dbReference>
<dbReference type="FunCoup" id="Q8R1R5">
    <property type="interactions" value="1129"/>
</dbReference>
<dbReference type="STRING" id="10116.ENSRNOP00000024427"/>
<dbReference type="GlyGen" id="Q8R1R5">
    <property type="glycosylation" value="1 site"/>
</dbReference>
<dbReference type="PhosphoSitePlus" id="Q8R1R5"/>
<dbReference type="SwissPalm" id="Q8R1R5"/>
<dbReference type="PaxDb" id="10116-ENSRNOP00000024427"/>
<dbReference type="GeneID" id="171485"/>
<dbReference type="UCSC" id="RGD:620896">
    <property type="organism name" value="rat"/>
</dbReference>
<dbReference type="AGR" id="RGD:620896"/>
<dbReference type="RGD" id="620896">
    <property type="gene designation" value="Cd99l2"/>
</dbReference>
<dbReference type="eggNOG" id="ENOG502RZ6C">
    <property type="taxonomic scope" value="Eukaryota"/>
</dbReference>
<dbReference type="HOGENOM" id="CLU_092825_0_1_1"/>
<dbReference type="InParanoid" id="Q8R1R5"/>
<dbReference type="OrthoDB" id="8961553at2759"/>
<dbReference type="PhylomeDB" id="Q8R1R5"/>
<dbReference type="TreeFam" id="TF332323"/>
<dbReference type="PRO" id="PR:Q8R1R5"/>
<dbReference type="Proteomes" id="UP000002494">
    <property type="component" value="Chromosome 15"/>
</dbReference>
<dbReference type="Bgee" id="ENSRNOG00000018148">
    <property type="expression patterns" value="Expressed in ovary and 14 other cell types or tissues"/>
</dbReference>
<dbReference type="ExpressionAtlas" id="Q8R1R5">
    <property type="expression patterns" value="baseline and differential"/>
</dbReference>
<dbReference type="GO" id="GO:0005912">
    <property type="term" value="C:adherens junction"/>
    <property type="evidence" value="ECO:0000266"/>
    <property type="project" value="RGD"/>
</dbReference>
<dbReference type="GO" id="GO:0009986">
    <property type="term" value="C:cell surface"/>
    <property type="evidence" value="ECO:0000266"/>
    <property type="project" value="RGD"/>
</dbReference>
<dbReference type="GO" id="GO:0005576">
    <property type="term" value="C:extracellular region"/>
    <property type="evidence" value="ECO:0007669"/>
    <property type="project" value="UniProtKB-SubCell"/>
</dbReference>
<dbReference type="GO" id="GO:0005886">
    <property type="term" value="C:plasma membrane"/>
    <property type="evidence" value="ECO:0007669"/>
    <property type="project" value="UniProtKB-SubCell"/>
</dbReference>
<dbReference type="GO" id="GO:0007155">
    <property type="term" value="P:cell adhesion"/>
    <property type="evidence" value="ECO:0007669"/>
    <property type="project" value="UniProtKB-KW"/>
</dbReference>
<dbReference type="GO" id="GO:0050904">
    <property type="term" value="P:diapedesis"/>
    <property type="evidence" value="ECO:0000266"/>
    <property type="project" value="RGD"/>
</dbReference>
<dbReference type="GO" id="GO:2000391">
    <property type="term" value="P:positive regulation of neutrophil extravasation"/>
    <property type="evidence" value="ECO:0000266"/>
    <property type="project" value="RGD"/>
</dbReference>
<dbReference type="GO" id="GO:2000409">
    <property type="term" value="P:positive regulation of T cell extravasation"/>
    <property type="evidence" value="ECO:0000266"/>
    <property type="project" value="RGD"/>
</dbReference>
<dbReference type="InterPro" id="IPR022078">
    <property type="entry name" value="CD99L2"/>
</dbReference>
<dbReference type="PANTHER" id="PTHR15076:SF12">
    <property type="entry name" value="CD99 ANTIGEN-LIKE PROTEIN 2"/>
    <property type="match status" value="1"/>
</dbReference>
<dbReference type="PANTHER" id="PTHR15076">
    <property type="entry name" value="CD99/MIC2 PROTEIN RELATED"/>
    <property type="match status" value="1"/>
</dbReference>
<dbReference type="Pfam" id="PF12301">
    <property type="entry name" value="CD99L2"/>
    <property type="match status" value="1"/>
</dbReference>